<sequence>MAEQKKVVLAYSGGLDTSVAIKWLQEQGYDVVACCLDVGEGKDLAFVQQKALEVGAVNSYVIDAKEEFAREYALISMQAHTMYEGKYPLVSALSRPLIAKKLVEVAEKENAVAVAHGCTGKGNDQVRFEVSIKSLNPDLEVIAPVREWQWSREEEIEYAASRGIPIPINLDSPYSIDQNLWGRANECGILEDPWAAPPEGAYDLTASLENTPDVPEIIEIAFEAGVPVSIDGVTYPLADLILKLNETAGKHGIGRIDHVENRLVGIKSREVYECPGAMTLITAHKELEDLTLVKEVAHFKPAIEQKLSEIIYNGLWFSPLKDALLAFLKETQKHVTGVVRVKLFKGHAIVEGRKSEYSLYDEKLATYTKDDAFDHHAAIGFIELWGLPTKVNSIVKKKEQIEA</sequence>
<keyword id="KW-0028">Amino-acid biosynthesis</keyword>
<keyword id="KW-0055">Arginine biosynthesis</keyword>
<keyword id="KW-0067">ATP-binding</keyword>
<keyword id="KW-0963">Cytoplasm</keyword>
<keyword id="KW-0436">Ligase</keyword>
<keyword id="KW-0547">Nucleotide-binding</keyword>
<accession>A7Z7M0</accession>
<proteinExistence type="inferred from homology"/>
<gene>
    <name evidence="1" type="primary">argG</name>
    <name type="ordered locus">RBAM_026380</name>
</gene>
<protein>
    <recommendedName>
        <fullName evidence="1">Argininosuccinate synthase</fullName>
        <ecNumber evidence="1">6.3.4.5</ecNumber>
    </recommendedName>
    <alternativeName>
        <fullName evidence="1">Citrulline--aspartate ligase</fullName>
    </alternativeName>
</protein>
<comment type="catalytic activity">
    <reaction evidence="1">
        <text>L-citrulline + L-aspartate + ATP = 2-(N(omega)-L-arginino)succinate + AMP + diphosphate + H(+)</text>
        <dbReference type="Rhea" id="RHEA:10932"/>
        <dbReference type="ChEBI" id="CHEBI:15378"/>
        <dbReference type="ChEBI" id="CHEBI:29991"/>
        <dbReference type="ChEBI" id="CHEBI:30616"/>
        <dbReference type="ChEBI" id="CHEBI:33019"/>
        <dbReference type="ChEBI" id="CHEBI:57472"/>
        <dbReference type="ChEBI" id="CHEBI:57743"/>
        <dbReference type="ChEBI" id="CHEBI:456215"/>
        <dbReference type="EC" id="6.3.4.5"/>
    </reaction>
</comment>
<comment type="pathway">
    <text evidence="1">Amino-acid biosynthesis; L-arginine biosynthesis; L-arginine from L-ornithine and carbamoyl phosphate: step 2/3.</text>
</comment>
<comment type="subunit">
    <text evidence="1">Homotetramer.</text>
</comment>
<comment type="subcellular location">
    <subcellularLocation>
        <location evidence="1">Cytoplasm</location>
    </subcellularLocation>
</comment>
<comment type="similarity">
    <text evidence="1">Belongs to the argininosuccinate synthase family. Type 1 subfamily.</text>
</comment>
<name>ASSY_BACVZ</name>
<feature type="chain" id="PRO_1000000382" description="Argininosuccinate synthase">
    <location>
        <begin position="1"/>
        <end position="403"/>
    </location>
</feature>
<feature type="binding site" evidence="1">
    <location>
        <begin position="10"/>
        <end position="18"/>
    </location>
    <ligand>
        <name>ATP</name>
        <dbReference type="ChEBI" id="CHEBI:30616"/>
    </ligand>
</feature>
<feature type="binding site" evidence="1">
    <location>
        <position position="87"/>
    </location>
    <ligand>
        <name>L-citrulline</name>
        <dbReference type="ChEBI" id="CHEBI:57743"/>
    </ligand>
</feature>
<feature type="binding site" evidence="1">
    <location>
        <position position="117"/>
    </location>
    <ligand>
        <name>ATP</name>
        <dbReference type="ChEBI" id="CHEBI:30616"/>
    </ligand>
</feature>
<feature type="binding site" evidence="1">
    <location>
        <position position="119"/>
    </location>
    <ligand>
        <name>L-aspartate</name>
        <dbReference type="ChEBI" id="CHEBI:29991"/>
    </ligand>
</feature>
<feature type="binding site" evidence="1">
    <location>
        <position position="123"/>
    </location>
    <ligand>
        <name>L-aspartate</name>
        <dbReference type="ChEBI" id="CHEBI:29991"/>
    </ligand>
</feature>
<feature type="binding site" evidence="1">
    <location>
        <position position="123"/>
    </location>
    <ligand>
        <name>L-citrulline</name>
        <dbReference type="ChEBI" id="CHEBI:57743"/>
    </ligand>
</feature>
<feature type="binding site" evidence="1">
    <location>
        <position position="124"/>
    </location>
    <ligand>
        <name>L-aspartate</name>
        <dbReference type="ChEBI" id="CHEBI:29991"/>
    </ligand>
</feature>
<feature type="binding site" evidence="1">
    <location>
        <position position="127"/>
    </location>
    <ligand>
        <name>L-citrulline</name>
        <dbReference type="ChEBI" id="CHEBI:57743"/>
    </ligand>
</feature>
<feature type="binding site" evidence="1">
    <location>
        <position position="175"/>
    </location>
    <ligand>
        <name>L-citrulline</name>
        <dbReference type="ChEBI" id="CHEBI:57743"/>
    </ligand>
</feature>
<feature type="binding site" evidence="1">
    <location>
        <position position="260"/>
    </location>
    <ligand>
        <name>L-citrulline</name>
        <dbReference type="ChEBI" id="CHEBI:57743"/>
    </ligand>
</feature>
<feature type="binding site" evidence="1">
    <location>
        <position position="272"/>
    </location>
    <ligand>
        <name>L-citrulline</name>
        <dbReference type="ChEBI" id="CHEBI:57743"/>
    </ligand>
</feature>
<dbReference type="EC" id="6.3.4.5" evidence="1"/>
<dbReference type="EMBL" id="CP000560">
    <property type="protein sequence ID" value="ABS74996.1"/>
    <property type="molecule type" value="Genomic_DNA"/>
</dbReference>
<dbReference type="RefSeq" id="WP_003152428.1">
    <property type="nucleotide sequence ID" value="NC_009725.2"/>
</dbReference>
<dbReference type="SMR" id="A7Z7M0"/>
<dbReference type="GeneID" id="93081780"/>
<dbReference type="KEGG" id="bay:RBAM_026380"/>
<dbReference type="HOGENOM" id="CLU_032784_4_2_9"/>
<dbReference type="UniPathway" id="UPA00068">
    <property type="reaction ID" value="UER00113"/>
</dbReference>
<dbReference type="Proteomes" id="UP000001120">
    <property type="component" value="Chromosome"/>
</dbReference>
<dbReference type="GO" id="GO:0005737">
    <property type="term" value="C:cytoplasm"/>
    <property type="evidence" value="ECO:0007669"/>
    <property type="project" value="UniProtKB-SubCell"/>
</dbReference>
<dbReference type="GO" id="GO:0004055">
    <property type="term" value="F:argininosuccinate synthase activity"/>
    <property type="evidence" value="ECO:0007669"/>
    <property type="project" value="UniProtKB-UniRule"/>
</dbReference>
<dbReference type="GO" id="GO:0005524">
    <property type="term" value="F:ATP binding"/>
    <property type="evidence" value="ECO:0007669"/>
    <property type="project" value="UniProtKB-UniRule"/>
</dbReference>
<dbReference type="GO" id="GO:0000053">
    <property type="term" value="P:argininosuccinate metabolic process"/>
    <property type="evidence" value="ECO:0007669"/>
    <property type="project" value="TreeGrafter"/>
</dbReference>
<dbReference type="GO" id="GO:0006526">
    <property type="term" value="P:L-arginine biosynthetic process"/>
    <property type="evidence" value="ECO:0007669"/>
    <property type="project" value="UniProtKB-UniRule"/>
</dbReference>
<dbReference type="GO" id="GO:0000050">
    <property type="term" value="P:urea cycle"/>
    <property type="evidence" value="ECO:0007669"/>
    <property type="project" value="TreeGrafter"/>
</dbReference>
<dbReference type="CDD" id="cd01999">
    <property type="entry name" value="ASS"/>
    <property type="match status" value="1"/>
</dbReference>
<dbReference type="FunFam" id="1.20.5.470:FF:000002">
    <property type="entry name" value="Argininosuccinate synthase"/>
    <property type="match status" value="1"/>
</dbReference>
<dbReference type="FunFam" id="3.40.50.620:FF:000038">
    <property type="entry name" value="Argininosuccinate synthase"/>
    <property type="match status" value="1"/>
</dbReference>
<dbReference type="FunFam" id="3.90.1260.10:FF:000007">
    <property type="entry name" value="Argininosuccinate synthase"/>
    <property type="match status" value="1"/>
</dbReference>
<dbReference type="Gene3D" id="3.90.1260.10">
    <property type="entry name" value="Argininosuccinate synthetase, chain A, domain 2"/>
    <property type="match status" value="1"/>
</dbReference>
<dbReference type="Gene3D" id="3.40.50.620">
    <property type="entry name" value="HUPs"/>
    <property type="match status" value="1"/>
</dbReference>
<dbReference type="Gene3D" id="1.20.5.470">
    <property type="entry name" value="Single helix bin"/>
    <property type="match status" value="1"/>
</dbReference>
<dbReference type="HAMAP" id="MF_00005">
    <property type="entry name" value="Arg_succ_synth_type1"/>
    <property type="match status" value="1"/>
</dbReference>
<dbReference type="InterPro" id="IPR048268">
    <property type="entry name" value="Arginosuc_syn_C"/>
</dbReference>
<dbReference type="InterPro" id="IPR048267">
    <property type="entry name" value="Arginosuc_syn_N"/>
</dbReference>
<dbReference type="InterPro" id="IPR001518">
    <property type="entry name" value="Arginosuc_synth"/>
</dbReference>
<dbReference type="InterPro" id="IPR018223">
    <property type="entry name" value="Arginosuc_synth_CS"/>
</dbReference>
<dbReference type="InterPro" id="IPR023434">
    <property type="entry name" value="Arginosuc_synth_type_1_subfam"/>
</dbReference>
<dbReference type="InterPro" id="IPR024074">
    <property type="entry name" value="AS_cat/multimer_dom_body"/>
</dbReference>
<dbReference type="InterPro" id="IPR014729">
    <property type="entry name" value="Rossmann-like_a/b/a_fold"/>
</dbReference>
<dbReference type="NCBIfam" id="TIGR00032">
    <property type="entry name" value="argG"/>
    <property type="match status" value="1"/>
</dbReference>
<dbReference type="NCBIfam" id="NF001770">
    <property type="entry name" value="PRK00509.1"/>
    <property type="match status" value="1"/>
</dbReference>
<dbReference type="PANTHER" id="PTHR11587">
    <property type="entry name" value="ARGININOSUCCINATE SYNTHASE"/>
    <property type="match status" value="1"/>
</dbReference>
<dbReference type="PANTHER" id="PTHR11587:SF2">
    <property type="entry name" value="ARGININOSUCCINATE SYNTHASE"/>
    <property type="match status" value="1"/>
</dbReference>
<dbReference type="Pfam" id="PF20979">
    <property type="entry name" value="Arginosuc_syn_C"/>
    <property type="match status" value="1"/>
</dbReference>
<dbReference type="Pfam" id="PF00764">
    <property type="entry name" value="Arginosuc_synth"/>
    <property type="match status" value="1"/>
</dbReference>
<dbReference type="SUPFAM" id="SSF52402">
    <property type="entry name" value="Adenine nucleotide alpha hydrolases-like"/>
    <property type="match status" value="1"/>
</dbReference>
<dbReference type="SUPFAM" id="SSF69864">
    <property type="entry name" value="Argininosuccinate synthetase, C-terminal domain"/>
    <property type="match status" value="1"/>
</dbReference>
<dbReference type="PROSITE" id="PS00564">
    <property type="entry name" value="ARGININOSUCCIN_SYN_1"/>
    <property type="match status" value="1"/>
</dbReference>
<dbReference type="PROSITE" id="PS00565">
    <property type="entry name" value="ARGININOSUCCIN_SYN_2"/>
    <property type="match status" value="1"/>
</dbReference>
<organism>
    <name type="scientific">Bacillus velezensis (strain DSM 23117 / BGSC 10A6 / LMG 26770 / FZB42)</name>
    <name type="common">Bacillus amyloliquefaciens subsp. plantarum</name>
    <dbReference type="NCBI Taxonomy" id="326423"/>
    <lineage>
        <taxon>Bacteria</taxon>
        <taxon>Bacillati</taxon>
        <taxon>Bacillota</taxon>
        <taxon>Bacilli</taxon>
        <taxon>Bacillales</taxon>
        <taxon>Bacillaceae</taxon>
        <taxon>Bacillus</taxon>
        <taxon>Bacillus amyloliquefaciens group</taxon>
    </lineage>
</organism>
<evidence type="ECO:0000255" key="1">
    <source>
        <dbReference type="HAMAP-Rule" id="MF_00005"/>
    </source>
</evidence>
<reference key="1">
    <citation type="journal article" date="2007" name="Nat. Biotechnol.">
        <title>Comparative analysis of the complete genome sequence of the plant growth-promoting bacterium Bacillus amyloliquefaciens FZB42.</title>
        <authorList>
            <person name="Chen X.H."/>
            <person name="Koumoutsi A."/>
            <person name="Scholz R."/>
            <person name="Eisenreich A."/>
            <person name="Schneider K."/>
            <person name="Heinemeyer I."/>
            <person name="Morgenstern B."/>
            <person name="Voss B."/>
            <person name="Hess W.R."/>
            <person name="Reva O."/>
            <person name="Junge H."/>
            <person name="Voigt B."/>
            <person name="Jungblut P.R."/>
            <person name="Vater J."/>
            <person name="Suessmuth R."/>
            <person name="Liesegang H."/>
            <person name="Strittmatter A."/>
            <person name="Gottschalk G."/>
            <person name="Borriss R."/>
        </authorList>
    </citation>
    <scope>NUCLEOTIDE SEQUENCE [LARGE SCALE GENOMIC DNA]</scope>
    <source>
        <strain>DSM 23117 / BGSC 10A6 / LMG 26770 / FZB42</strain>
    </source>
</reference>